<feature type="chain" id="PRO_1000115991" description="Probable GTP-binding protein EngB">
    <location>
        <begin position="1"/>
        <end position="193"/>
    </location>
</feature>
<feature type="domain" description="EngB-type G" evidence="1">
    <location>
        <begin position="22"/>
        <end position="193"/>
    </location>
</feature>
<feature type="binding site" evidence="1">
    <location>
        <begin position="30"/>
        <end position="37"/>
    </location>
    <ligand>
        <name>GTP</name>
        <dbReference type="ChEBI" id="CHEBI:37565"/>
    </ligand>
</feature>
<feature type="binding site" evidence="1">
    <location>
        <position position="37"/>
    </location>
    <ligand>
        <name>Mg(2+)</name>
        <dbReference type="ChEBI" id="CHEBI:18420"/>
    </ligand>
</feature>
<feature type="binding site" evidence="1">
    <location>
        <begin position="57"/>
        <end position="61"/>
    </location>
    <ligand>
        <name>GTP</name>
        <dbReference type="ChEBI" id="CHEBI:37565"/>
    </ligand>
</feature>
<feature type="binding site" evidence="1">
    <location>
        <position position="59"/>
    </location>
    <ligand>
        <name>Mg(2+)</name>
        <dbReference type="ChEBI" id="CHEBI:18420"/>
    </ligand>
</feature>
<feature type="binding site" evidence="1">
    <location>
        <begin position="75"/>
        <end position="78"/>
    </location>
    <ligand>
        <name>GTP</name>
        <dbReference type="ChEBI" id="CHEBI:37565"/>
    </ligand>
</feature>
<feature type="binding site" evidence="1">
    <location>
        <begin position="142"/>
        <end position="145"/>
    </location>
    <ligand>
        <name>GTP</name>
        <dbReference type="ChEBI" id="CHEBI:37565"/>
    </ligand>
</feature>
<feature type="binding site" evidence="1">
    <location>
        <begin position="172"/>
        <end position="174"/>
    </location>
    <ligand>
        <name>GTP</name>
        <dbReference type="ChEBI" id="CHEBI:37565"/>
    </ligand>
</feature>
<comment type="function">
    <text evidence="1">Necessary for normal cell division and for the maintenance of normal septation.</text>
</comment>
<comment type="cofactor">
    <cofactor evidence="1">
        <name>Mg(2+)</name>
        <dbReference type="ChEBI" id="CHEBI:18420"/>
    </cofactor>
</comment>
<comment type="similarity">
    <text evidence="1">Belongs to the TRAFAC class TrmE-Era-EngA-EngB-Septin-like GTPase superfamily. EngB GTPase family.</text>
</comment>
<organism>
    <name type="scientific">Pelodictyon phaeoclathratiforme (strain DSM 5477 / BU-1)</name>
    <dbReference type="NCBI Taxonomy" id="324925"/>
    <lineage>
        <taxon>Bacteria</taxon>
        <taxon>Pseudomonadati</taxon>
        <taxon>Chlorobiota</taxon>
        <taxon>Chlorobiia</taxon>
        <taxon>Chlorobiales</taxon>
        <taxon>Chlorobiaceae</taxon>
        <taxon>Chlorobium/Pelodictyon group</taxon>
        <taxon>Pelodictyon</taxon>
    </lineage>
</organism>
<accession>B4SC74</accession>
<dbReference type="EMBL" id="CP001110">
    <property type="protein sequence ID" value="ACF42654.1"/>
    <property type="molecule type" value="Genomic_DNA"/>
</dbReference>
<dbReference type="RefSeq" id="WP_012507149.1">
    <property type="nucleotide sequence ID" value="NC_011060.1"/>
</dbReference>
<dbReference type="SMR" id="B4SC74"/>
<dbReference type="STRING" id="324925.Ppha_0321"/>
<dbReference type="KEGG" id="pph:Ppha_0321"/>
<dbReference type="eggNOG" id="COG0218">
    <property type="taxonomic scope" value="Bacteria"/>
</dbReference>
<dbReference type="HOGENOM" id="CLU_033732_3_0_10"/>
<dbReference type="OrthoDB" id="9804921at2"/>
<dbReference type="Proteomes" id="UP000002724">
    <property type="component" value="Chromosome"/>
</dbReference>
<dbReference type="GO" id="GO:0005829">
    <property type="term" value="C:cytosol"/>
    <property type="evidence" value="ECO:0007669"/>
    <property type="project" value="TreeGrafter"/>
</dbReference>
<dbReference type="GO" id="GO:0005525">
    <property type="term" value="F:GTP binding"/>
    <property type="evidence" value="ECO:0007669"/>
    <property type="project" value="UniProtKB-UniRule"/>
</dbReference>
<dbReference type="GO" id="GO:0046872">
    <property type="term" value="F:metal ion binding"/>
    <property type="evidence" value="ECO:0007669"/>
    <property type="project" value="UniProtKB-KW"/>
</dbReference>
<dbReference type="GO" id="GO:0000917">
    <property type="term" value="P:division septum assembly"/>
    <property type="evidence" value="ECO:0007669"/>
    <property type="project" value="UniProtKB-KW"/>
</dbReference>
<dbReference type="CDD" id="cd01876">
    <property type="entry name" value="YihA_EngB"/>
    <property type="match status" value="1"/>
</dbReference>
<dbReference type="Gene3D" id="3.40.50.300">
    <property type="entry name" value="P-loop containing nucleotide triphosphate hydrolases"/>
    <property type="match status" value="1"/>
</dbReference>
<dbReference type="HAMAP" id="MF_00321">
    <property type="entry name" value="GTPase_EngB"/>
    <property type="match status" value="1"/>
</dbReference>
<dbReference type="InterPro" id="IPR030393">
    <property type="entry name" value="G_ENGB_dom"/>
</dbReference>
<dbReference type="InterPro" id="IPR006073">
    <property type="entry name" value="GTP-bd"/>
</dbReference>
<dbReference type="InterPro" id="IPR019987">
    <property type="entry name" value="GTP-bd_ribosome_bio_YsxC"/>
</dbReference>
<dbReference type="InterPro" id="IPR027417">
    <property type="entry name" value="P-loop_NTPase"/>
</dbReference>
<dbReference type="NCBIfam" id="TIGR03598">
    <property type="entry name" value="GTPase_YsxC"/>
    <property type="match status" value="1"/>
</dbReference>
<dbReference type="PANTHER" id="PTHR11649:SF13">
    <property type="entry name" value="ENGB-TYPE G DOMAIN-CONTAINING PROTEIN"/>
    <property type="match status" value="1"/>
</dbReference>
<dbReference type="PANTHER" id="PTHR11649">
    <property type="entry name" value="MSS1/TRME-RELATED GTP-BINDING PROTEIN"/>
    <property type="match status" value="1"/>
</dbReference>
<dbReference type="Pfam" id="PF01926">
    <property type="entry name" value="MMR_HSR1"/>
    <property type="match status" value="1"/>
</dbReference>
<dbReference type="SUPFAM" id="SSF52540">
    <property type="entry name" value="P-loop containing nucleoside triphosphate hydrolases"/>
    <property type="match status" value="1"/>
</dbReference>
<dbReference type="PROSITE" id="PS51706">
    <property type="entry name" value="G_ENGB"/>
    <property type="match status" value="1"/>
</dbReference>
<reference key="1">
    <citation type="submission" date="2008-06" db="EMBL/GenBank/DDBJ databases">
        <title>Complete sequence of Pelodictyon phaeoclathratiforme BU-1.</title>
        <authorList>
            <consortium name="US DOE Joint Genome Institute"/>
            <person name="Lucas S."/>
            <person name="Copeland A."/>
            <person name="Lapidus A."/>
            <person name="Glavina del Rio T."/>
            <person name="Dalin E."/>
            <person name="Tice H."/>
            <person name="Bruce D."/>
            <person name="Goodwin L."/>
            <person name="Pitluck S."/>
            <person name="Schmutz J."/>
            <person name="Larimer F."/>
            <person name="Land M."/>
            <person name="Hauser L."/>
            <person name="Kyrpides N."/>
            <person name="Mikhailova N."/>
            <person name="Liu Z."/>
            <person name="Li T."/>
            <person name="Zhao F."/>
            <person name="Overmann J."/>
            <person name="Bryant D.A."/>
            <person name="Richardson P."/>
        </authorList>
    </citation>
    <scope>NUCLEOTIDE SEQUENCE [LARGE SCALE GENOMIC DNA]</scope>
    <source>
        <strain>DSM 5477 / BU-1</strain>
    </source>
</reference>
<proteinExistence type="inferred from homology"/>
<name>ENGB_PELPB</name>
<keyword id="KW-0131">Cell cycle</keyword>
<keyword id="KW-0132">Cell division</keyword>
<keyword id="KW-0342">GTP-binding</keyword>
<keyword id="KW-0460">Magnesium</keyword>
<keyword id="KW-0479">Metal-binding</keyword>
<keyword id="KW-0547">Nucleotide-binding</keyword>
<keyword id="KW-1185">Reference proteome</keyword>
<keyword id="KW-0717">Septation</keyword>
<gene>
    <name evidence="1" type="primary">engB</name>
    <name type="ordered locus">Ppha_0321</name>
</gene>
<evidence type="ECO:0000255" key="1">
    <source>
        <dbReference type="HAMAP-Rule" id="MF_00321"/>
    </source>
</evidence>
<protein>
    <recommendedName>
        <fullName evidence="1">Probable GTP-binding protein EngB</fullName>
    </recommendedName>
</protein>
<sequence length="193" mass="21329">MKIVNTAFHISVSALSGLPEDSFPEIVFAGRSNVGKSTLLNSLTGVKGLAKTSATPGKTRLINYFLINRDVYFVDLPGYGYAAVGHAEKALWGNLLSSYIIQRRSISLVVLLLDSRHPAMQSDRAMISFLESHDRPYGIVLTKYDKLTQKEKVQTGRIMESCAAKAKFIVNYSSFSGKGKSELLAHFDQYICQ</sequence>